<comment type="function">
    <text evidence="2">Involved in cuticle development and morphogenesis.</text>
</comment>
<comment type="subcellular location">
    <subcellularLocation>
        <location evidence="3">Cell membrane</location>
        <topology evidence="3">Lipid-anchor</topology>
    </subcellularLocation>
    <subcellularLocation>
        <location evidence="2">Secreted</location>
        <location evidence="2">Cell wall</location>
    </subcellularLocation>
</comment>
<comment type="alternative products">
    <event type="alternative splicing"/>
    <isoform>
        <id>Q700D5-1</id>
        <name>1</name>
        <sequence type="displayed"/>
    </isoform>
    <isoform>
        <id>Q700D5-2</id>
        <name>2</name>
        <sequence type="described" ref="VSP_058509"/>
    </isoform>
</comment>
<comment type="tissue specificity">
    <text evidence="5">Expressed in epidermal cells.</text>
</comment>
<comment type="induction">
    <text evidence="6">By UV-B.</text>
</comment>
<comment type="sequence caution" evidence="8">
    <conflict type="erroneous initiation">
        <sequence resource="EMBL-CDS" id="BAB09577"/>
    </conflict>
    <text>Truncated N-terminus.</text>
</comment>
<dbReference type="EC" id="3.1.1.-" evidence="8"/>
<dbReference type="EMBL" id="AB006706">
    <property type="protein sequence ID" value="BAB09577.1"/>
    <property type="status" value="ALT_INIT"/>
    <property type="molecule type" value="Genomic_DNA"/>
</dbReference>
<dbReference type="EMBL" id="CP002688">
    <property type="protein sequence ID" value="AED92467.1"/>
    <property type="molecule type" value="Genomic_DNA"/>
</dbReference>
<dbReference type="EMBL" id="CP002688">
    <property type="protein sequence ID" value="AED92468.1"/>
    <property type="molecule type" value="Genomic_DNA"/>
</dbReference>
<dbReference type="EMBL" id="AJ630490">
    <property type="protein sequence ID" value="CAG25863.1"/>
    <property type="molecule type" value="mRNA"/>
</dbReference>
<dbReference type="EMBL" id="AY568662">
    <property type="protein sequence ID" value="AAS79552.1"/>
    <property type="molecule type" value="mRNA"/>
</dbReference>
<dbReference type="RefSeq" id="NP_001119241.1">
    <molecule id="Q700D5-2"/>
    <property type="nucleotide sequence ID" value="NM_001125769.2"/>
</dbReference>
<dbReference type="RefSeq" id="NP_197280.2">
    <molecule id="Q700D5-1"/>
    <property type="nucleotide sequence ID" value="NM_121784.2"/>
</dbReference>
<dbReference type="SMR" id="Q700D5"/>
<dbReference type="FunCoup" id="Q700D5">
    <property type="interactions" value="2"/>
</dbReference>
<dbReference type="STRING" id="3702.Q700D5"/>
<dbReference type="ESTHER" id="arath-Q9FN74">
    <property type="family name" value="Bodyguard"/>
</dbReference>
<dbReference type="MEROPS" id="S33.A73"/>
<dbReference type="PaxDb" id="3702-AT5G17780.2"/>
<dbReference type="ProteomicsDB" id="240777">
    <molecule id="Q700D5-1"/>
</dbReference>
<dbReference type="EnsemblPlants" id="AT5G17780.1">
    <molecule id="Q700D5-1"/>
    <property type="protein sequence ID" value="AT5G17780.1"/>
    <property type="gene ID" value="AT5G17780"/>
</dbReference>
<dbReference type="EnsemblPlants" id="AT5G17780.2">
    <molecule id="Q700D5-2"/>
    <property type="protein sequence ID" value="AT5G17780.2"/>
    <property type="gene ID" value="AT5G17780"/>
</dbReference>
<dbReference type="GeneID" id="831646"/>
<dbReference type="Gramene" id="AT5G17780.1">
    <molecule id="Q700D5-1"/>
    <property type="protein sequence ID" value="AT5G17780.1"/>
    <property type="gene ID" value="AT5G17780"/>
</dbReference>
<dbReference type="Gramene" id="AT5G17780.2">
    <molecule id="Q700D5-2"/>
    <property type="protein sequence ID" value="AT5G17780.2"/>
    <property type="gene ID" value="AT5G17780"/>
</dbReference>
<dbReference type="KEGG" id="ath:AT5G17780"/>
<dbReference type="Araport" id="AT5G17780"/>
<dbReference type="TAIR" id="AT5G17780"/>
<dbReference type="eggNOG" id="KOG1454">
    <property type="taxonomic scope" value="Eukaryota"/>
</dbReference>
<dbReference type="HOGENOM" id="CLU_051935_0_0_1"/>
<dbReference type="InParanoid" id="Q700D5"/>
<dbReference type="OMA" id="CGGAKFM"/>
<dbReference type="PhylomeDB" id="Q700D5"/>
<dbReference type="PRO" id="PR:Q700D5"/>
<dbReference type="Proteomes" id="UP000006548">
    <property type="component" value="Chromosome 5"/>
</dbReference>
<dbReference type="ExpressionAtlas" id="Q700D5">
    <property type="expression patterns" value="baseline and differential"/>
</dbReference>
<dbReference type="GO" id="GO:0005576">
    <property type="term" value="C:extracellular region"/>
    <property type="evidence" value="ECO:0007669"/>
    <property type="project" value="UniProtKB-KW"/>
</dbReference>
<dbReference type="GO" id="GO:0005886">
    <property type="term" value="C:plasma membrane"/>
    <property type="evidence" value="ECO:0007669"/>
    <property type="project" value="UniProtKB-SubCell"/>
</dbReference>
<dbReference type="GO" id="GO:0016787">
    <property type="term" value="F:hydrolase activity"/>
    <property type="evidence" value="ECO:0007669"/>
    <property type="project" value="UniProtKB-KW"/>
</dbReference>
<dbReference type="GO" id="GO:0071555">
    <property type="term" value="P:cell wall organization"/>
    <property type="evidence" value="ECO:0007669"/>
    <property type="project" value="UniProtKB-KW"/>
</dbReference>
<dbReference type="GO" id="GO:0010224">
    <property type="term" value="P:response to UV-B"/>
    <property type="evidence" value="ECO:0000270"/>
    <property type="project" value="UniProtKB"/>
</dbReference>
<dbReference type="Gene3D" id="3.40.50.1820">
    <property type="entry name" value="alpha/beta hydrolase"/>
    <property type="match status" value="1"/>
</dbReference>
<dbReference type="InterPro" id="IPR000073">
    <property type="entry name" value="AB_hydrolase_1"/>
</dbReference>
<dbReference type="InterPro" id="IPR029058">
    <property type="entry name" value="AB_hydrolase_fold"/>
</dbReference>
<dbReference type="PANTHER" id="PTHR43689">
    <property type="entry name" value="HYDROLASE"/>
    <property type="match status" value="1"/>
</dbReference>
<dbReference type="PANTHER" id="PTHR43689:SF14">
    <property type="entry name" value="LYSOPHOSPHOLIPASE BODYGUARD 4-RELATED"/>
    <property type="match status" value="1"/>
</dbReference>
<dbReference type="Pfam" id="PF00561">
    <property type="entry name" value="Abhydrolase_1"/>
    <property type="match status" value="1"/>
</dbReference>
<dbReference type="PRINTS" id="PR00111">
    <property type="entry name" value="ABHYDROLASE"/>
</dbReference>
<dbReference type="SUPFAM" id="SSF53474">
    <property type="entry name" value="alpha/beta-Hydrolases"/>
    <property type="match status" value="1"/>
</dbReference>
<reference key="1">
    <citation type="journal article" date="1997" name="DNA Res.">
        <title>Structural analysis of Arabidopsis thaliana chromosome 5. II. Sequence features of the regions of 1,044,062 bp covered by thirteen physically assigned P1 clones.</title>
        <authorList>
            <person name="Kotani H."/>
            <person name="Nakamura Y."/>
            <person name="Sato S."/>
            <person name="Kaneko T."/>
            <person name="Asamizu E."/>
            <person name="Miyajima N."/>
            <person name="Tabata S."/>
        </authorList>
    </citation>
    <scope>NUCLEOTIDE SEQUENCE [LARGE SCALE GENOMIC DNA]</scope>
    <source>
        <strain>cv. Columbia</strain>
    </source>
</reference>
<reference key="2">
    <citation type="journal article" date="2017" name="Plant J.">
        <title>Araport11: a complete reannotation of the Arabidopsis thaliana reference genome.</title>
        <authorList>
            <person name="Cheng C.Y."/>
            <person name="Krishnakumar V."/>
            <person name="Chan A.P."/>
            <person name="Thibaud-Nissen F."/>
            <person name="Schobel S."/>
            <person name="Town C.D."/>
        </authorList>
    </citation>
    <scope>GENOME REANNOTATION</scope>
    <source>
        <strain>cv. Columbia</strain>
    </source>
</reference>
<reference key="3">
    <citation type="journal article" date="2004" name="Plant Physiol.">
        <title>Genome-wide ORFeome cloning and analysis of Arabidopsis transcription factor genes.</title>
        <authorList>
            <person name="Gong W."/>
            <person name="Shen Y.-P."/>
            <person name="Ma L.-G."/>
            <person name="Pan Y."/>
            <person name="Du Y.-L."/>
            <person name="Wang D.-H."/>
            <person name="Yang J.-Y."/>
            <person name="Hu L.-D."/>
            <person name="Liu X.-F."/>
            <person name="Dong C.-X."/>
            <person name="Ma L."/>
            <person name="Chen Y.-H."/>
            <person name="Yang X.-Y."/>
            <person name="Gao Y."/>
            <person name="Zhu D."/>
            <person name="Tan X."/>
            <person name="Mu J.-Y."/>
            <person name="Zhang D.-B."/>
            <person name="Liu Y.-L."/>
            <person name="Dinesh-Kumar S.P."/>
            <person name="Li Y."/>
            <person name="Wang X.-P."/>
            <person name="Gu H.-Y."/>
            <person name="Qu L.-J."/>
            <person name="Bai S.-N."/>
            <person name="Lu Y.-T."/>
            <person name="Li J.-Y."/>
            <person name="Zhao J.-D."/>
            <person name="Zuo J."/>
            <person name="Huang H."/>
            <person name="Deng X.-W."/>
            <person name="Zhu Y.-X."/>
        </authorList>
    </citation>
    <scope>NUCLEOTIDE SEQUENCE [LARGE SCALE MRNA]</scope>
</reference>
<reference key="4">
    <citation type="journal article" date="2005" name="Plant Physiol.">
        <title>Cuticular lipid composition, surface structure, and gene expression in Arabidopsis stem epidermis.</title>
        <authorList>
            <person name="Suh M.C."/>
            <person name="Samuels A.L."/>
            <person name="Jetter R."/>
            <person name="Kunst L."/>
            <person name="Pollard M."/>
            <person name="Ohlrogge J."/>
            <person name="Beisson F."/>
        </authorList>
    </citation>
    <scope>TISSUE SPECIFICITY</scope>
</reference>
<reference key="5">
    <citation type="journal article" date="2006" name="Plant Cell">
        <title>The epidermis-specific extracellular BODYGUARD controls cuticle development and morphogenesis in Arabidopsis.</title>
        <authorList>
            <person name="Kurdyukov S."/>
            <person name="Faust A."/>
            <person name="Nawrath C."/>
            <person name="Baer S."/>
            <person name="Voisin D."/>
            <person name="Efremova N."/>
            <person name="Franke R."/>
            <person name="Schreiber L."/>
            <person name="Saedler H."/>
            <person name="Metraux J.-P."/>
            <person name="Yephremov A."/>
        </authorList>
    </citation>
    <scope>GENE FAMILY</scope>
    <scope>NOMENCLATURE</scope>
    <source>
        <strain>cv. Columbia</strain>
    </source>
</reference>
<reference key="6">
    <citation type="journal article" date="2006" name="Plant Cell">
        <title>CONSTITUTIVELY PHOTOMORPHOGENIC1 is required for the UV-B response in Arabidopsis.</title>
        <authorList>
            <person name="Oravecz A."/>
            <person name="Baumann A."/>
            <person name="Mate Z."/>
            <person name="Brzezinska A."/>
            <person name="Molinier J."/>
            <person name="Oakeley E.J."/>
            <person name="Adam E."/>
            <person name="Schaefer E."/>
            <person name="Nagy F."/>
            <person name="Ulm R."/>
        </authorList>
    </citation>
    <scope>INDUCTION BY UV-B</scope>
</reference>
<reference key="7">
    <citation type="journal article" date="2013" name="Arabidopsis Book">
        <title>Acyl-lipid metabolism.</title>
        <authorList>
            <person name="Li-Beisson Y."/>
            <person name="Shorrosh B."/>
            <person name="Beisson F."/>
            <person name="Andersson M.X."/>
            <person name="Arondel V."/>
            <person name="Bates P.D."/>
            <person name="Baud S."/>
            <person name="Bird D."/>
            <person name="Debono A."/>
            <person name="Durrett T.P."/>
            <person name="Franke R.B."/>
            <person name="Graham I.A."/>
            <person name="Katayama K."/>
            <person name="Kelly A.A."/>
            <person name="Larson T."/>
            <person name="Markham J.E."/>
            <person name="Miquel M."/>
            <person name="Molina I."/>
            <person name="Nishida I."/>
            <person name="Rowland O."/>
            <person name="Samuels L."/>
            <person name="Schmid K.M."/>
            <person name="Wada H."/>
            <person name="Welti R."/>
            <person name="Xu C."/>
            <person name="Zallot R."/>
            <person name="Ohlrogge J."/>
        </authorList>
    </citation>
    <scope>REVIEW</scope>
</reference>
<keyword id="KW-0025">Alternative splicing</keyword>
<keyword id="KW-1003">Cell membrane</keyword>
<keyword id="KW-0134">Cell wall</keyword>
<keyword id="KW-0961">Cell wall biogenesis/degradation</keyword>
<keyword id="KW-0378">Hydrolase</keyword>
<keyword id="KW-0449">Lipoprotein</keyword>
<keyword id="KW-0472">Membrane</keyword>
<keyword id="KW-0564">Palmitate</keyword>
<keyword id="KW-1185">Reference proteome</keyword>
<keyword id="KW-0964">Secreted</keyword>
<keyword id="KW-0732">Signal</keyword>
<name>BDG4_ARATH</name>
<feature type="signal peptide" evidence="3">
    <location>
        <begin position="1"/>
        <end position="49"/>
    </location>
</feature>
<feature type="chain" id="PRO_0000437271" description="Probable lysophospholipase BODYGUARD 4">
    <location>
        <begin position="50"/>
        <end position="417"/>
    </location>
</feature>
<feature type="domain" description="AB hydrolase-1" evidence="3">
    <location>
        <begin position="150"/>
        <end position="259"/>
    </location>
</feature>
<feature type="active site" evidence="3">
    <location>
        <position position="154"/>
    </location>
</feature>
<feature type="active site" description="Nucleophile" evidence="1">
    <location>
        <position position="225"/>
    </location>
</feature>
<feature type="active site" description="Charge relay system" evidence="1">
    <location>
        <position position="367"/>
    </location>
</feature>
<feature type="active site" description="Charge relay system" evidence="1">
    <location>
        <position position="395"/>
    </location>
</feature>
<feature type="lipid moiety-binding region" description="N-palmitoyl cysteine" evidence="4">
    <location>
        <position position="50"/>
    </location>
</feature>
<feature type="splice variant" id="VSP_058509" description="In isoform 2.">
    <original>R</original>
    <variation>RET</variation>
    <location>
        <position position="139"/>
    </location>
</feature>
<gene>
    <name evidence="7" type="primary">BDG4</name>
    <name evidence="9" type="ordered locus">At5g17780</name>
    <name evidence="10" type="ORF">MVA3.14</name>
</gene>
<accession>Q700D5</accession>
<accession>B3H685</accession>
<accession>Q9FN74</accession>
<sequence>MSFPRKFGTAIHAALSFIVFFFLDLLDAILCVVYEFVDEILEENSTGCYCTAAAPQSQTTDENELSSETLFGRRNIFRGMWFLGFAREFKSKLSRKLRKSKIHQESVNRWSDCGCKSCKSWTKNEDGNLHVVVKDSTSREYSVQEPSENVIFIHGFMGSSHFWTETVFEHIQKDDYRLLAIDLLGFGESPKPRDSLYTLKDHVDTIERSVIKPYQLDSFHVVAHSMGCLIALALAAKHSNIVKSVTLVAPPYFPSSVEGSVLNRIARKRLWPPLAFGTAVMSWYEHIGRCVCFIICKHHKIWEWLIKLCIGKREIHWKIKDITRHTHHSAWHSMHNVICGGSKVADEHLETLIKSGVKIHLMQGDCDQIVPSHCSGNMKRTFPAVEVDIITGADHDSMISGRGEEFAEKLESIWCSC</sequence>
<organism>
    <name type="scientific">Arabidopsis thaliana</name>
    <name type="common">Mouse-ear cress</name>
    <dbReference type="NCBI Taxonomy" id="3702"/>
    <lineage>
        <taxon>Eukaryota</taxon>
        <taxon>Viridiplantae</taxon>
        <taxon>Streptophyta</taxon>
        <taxon>Embryophyta</taxon>
        <taxon>Tracheophyta</taxon>
        <taxon>Spermatophyta</taxon>
        <taxon>Magnoliopsida</taxon>
        <taxon>eudicotyledons</taxon>
        <taxon>Gunneridae</taxon>
        <taxon>Pentapetalae</taxon>
        <taxon>rosids</taxon>
        <taxon>malvids</taxon>
        <taxon>Brassicales</taxon>
        <taxon>Brassicaceae</taxon>
        <taxon>Camelineae</taxon>
        <taxon>Arabidopsis</taxon>
    </lineage>
</organism>
<proteinExistence type="evidence at transcript level"/>
<protein>
    <recommendedName>
        <fullName evidence="7">Probable lysophospholipase BODYGUARD 4</fullName>
        <shortName evidence="7">AtBDG4</shortName>
        <ecNumber evidence="8">3.1.1.-</ecNumber>
    </recommendedName>
</protein>
<evidence type="ECO:0000250" key="1">
    <source>
        <dbReference type="UniProtKB" id="P04180"/>
    </source>
</evidence>
<evidence type="ECO:0000250" key="2">
    <source>
        <dbReference type="UniProtKB" id="Q8LFX7"/>
    </source>
</evidence>
<evidence type="ECO:0000255" key="3"/>
<evidence type="ECO:0000255" key="4">
    <source>
        <dbReference type="PROSITE-ProRule" id="PRU00303"/>
    </source>
</evidence>
<evidence type="ECO:0000269" key="5">
    <source>
    </source>
</evidence>
<evidence type="ECO:0000269" key="6">
    <source>
    </source>
</evidence>
<evidence type="ECO:0000303" key="7">
    <source>
    </source>
</evidence>
<evidence type="ECO:0000305" key="8"/>
<evidence type="ECO:0000312" key="9">
    <source>
        <dbReference type="Araport" id="AT5G17780"/>
    </source>
</evidence>
<evidence type="ECO:0000312" key="10">
    <source>
        <dbReference type="EMBL" id="BAB09577.1"/>
    </source>
</evidence>